<organism>
    <name type="scientific">Salmonella enteritidis PT4 (strain P125109)</name>
    <dbReference type="NCBI Taxonomy" id="550537"/>
    <lineage>
        <taxon>Bacteria</taxon>
        <taxon>Pseudomonadati</taxon>
        <taxon>Pseudomonadota</taxon>
        <taxon>Gammaproteobacteria</taxon>
        <taxon>Enterobacterales</taxon>
        <taxon>Enterobacteriaceae</taxon>
        <taxon>Salmonella</taxon>
    </lineage>
</organism>
<accession>B5R3D3</accession>
<gene>
    <name evidence="1" type="primary">thrL</name>
    <name type="ordered locus">SEN4356A</name>
</gene>
<dbReference type="EMBL" id="AM933172">
    <property type="protein sequence ID" value="CAR35910.1"/>
    <property type="molecule type" value="Genomic_DNA"/>
</dbReference>
<dbReference type="KEGG" id="set:SEN4356A"/>
<dbReference type="Proteomes" id="UP000000613">
    <property type="component" value="Chromosome"/>
</dbReference>
<dbReference type="GO" id="GO:0009088">
    <property type="term" value="P:threonine biosynthetic process"/>
    <property type="evidence" value="ECO:0007669"/>
    <property type="project" value="UniProtKB-UniRule"/>
</dbReference>
<dbReference type="GO" id="GO:0031556">
    <property type="term" value="P:transcriptional attenuation by ribosome"/>
    <property type="evidence" value="ECO:0007669"/>
    <property type="project" value="UniProtKB-UniRule"/>
</dbReference>
<dbReference type="HAMAP" id="MF_01907">
    <property type="entry name" value="Leader_Thr"/>
    <property type="match status" value="1"/>
</dbReference>
<dbReference type="InterPro" id="IPR011720">
    <property type="entry name" value="Thr_lead_pept"/>
</dbReference>
<dbReference type="NCBIfam" id="NF007329">
    <property type="entry name" value="PRK09816.1"/>
    <property type="match status" value="1"/>
</dbReference>
<dbReference type="NCBIfam" id="TIGR02077">
    <property type="entry name" value="thr_lead_pep"/>
    <property type="match status" value="1"/>
</dbReference>
<dbReference type="Pfam" id="PF08254">
    <property type="entry name" value="Leader_Thr"/>
    <property type="match status" value="1"/>
</dbReference>
<keyword id="KW-0028">Amino-acid biosynthesis</keyword>
<keyword id="KW-0428">Leader peptide</keyword>
<keyword id="KW-0791">Threonine biosynthesis</keyword>
<sequence>MNRISTTTITTITITTGNGAG</sequence>
<comment type="function">
    <text evidence="1">This protein is involved in control of the biosynthesis of threonine.</text>
</comment>
<comment type="similarity">
    <text evidence="1">Belongs to the thr operon leader peptide family.</text>
</comment>
<feature type="peptide" id="PRO_1000188781" description="thr operon leader peptide">
    <location>
        <begin position="1"/>
        <end position="21"/>
    </location>
</feature>
<reference key="1">
    <citation type="journal article" date="2008" name="Genome Res.">
        <title>Comparative genome analysis of Salmonella enteritidis PT4 and Salmonella gallinarum 287/91 provides insights into evolutionary and host adaptation pathways.</title>
        <authorList>
            <person name="Thomson N.R."/>
            <person name="Clayton D.J."/>
            <person name="Windhorst D."/>
            <person name="Vernikos G."/>
            <person name="Davidson S."/>
            <person name="Churcher C."/>
            <person name="Quail M.A."/>
            <person name="Stevens M."/>
            <person name="Jones M.A."/>
            <person name="Watson M."/>
            <person name="Barron A."/>
            <person name="Layton A."/>
            <person name="Pickard D."/>
            <person name="Kingsley R.A."/>
            <person name="Bignell A."/>
            <person name="Clark L."/>
            <person name="Harris B."/>
            <person name="Ormond D."/>
            <person name="Abdellah Z."/>
            <person name="Brooks K."/>
            <person name="Cherevach I."/>
            <person name="Chillingworth T."/>
            <person name="Woodward J."/>
            <person name="Norberczak H."/>
            <person name="Lord A."/>
            <person name="Arrowsmith C."/>
            <person name="Jagels K."/>
            <person name="Moule S."/>
            <person name="Mungall K."/>
            <person name="Saunders M."/>
            <person name="Whitehead S."/>
            <person name="Chabalgoity J.A."/>
            <person name="Maskell D."/>
            <person name="Humphreys T."/>
            <person name="Roberts M."/>
            <person name="Barrow P.A."/>
            <person name="Dougan G."/>
            <person name="Parkhill J."/>
        </authorList>
    </citation>
    <scope>NUCLEOTIDE SEQUENCE [LARGE SCALE GENOMIC DNA]</scope>
    <source>
        <strain>P125109</strain>
    </source>
</reference>
<name>LPT_SALEP</name>
<proteinExistence type="inferred from homology"/>
<evidence type="ECO:0000255" key="1">
    <source>
        <dbReference type="HAMAP-Rule" id="MF_01907"/>
    </source>
</evidence>
<protein>
    <recommendedName>
        <fullName evidence="1">thr operon leader peptide</fullName>
    </recommendedName>
    <alternativeName>
        <fullName evidence="1">thr operon attenuator</fullName>
    </alternativeName>
</protein>